<organism>
    <name type="scientific">Sodalis glossinidius (strain morsitans)</name>
    <dbReference type="NCBI Taxonomy" id="343509"/>
    <lineage>
        <taxon>Bacteria</taxon>
        <taxon>Pseudomonadati</taxon>
        <taxon>Pseudomonadota</taxon>
        <taxon>Gammaproteobacteria</taxon>
        <taxon>Enterobacterales</taxon>
        <taxon>Bruguierivoracaceae</taxon>
        <taxon>Sodalis</taxon>
    </lineage>
</organism>
<reference key="1">
    <citation type="journal article" date="2006" name="Genome Res.">
        <title>Massive genome erosion and functional adaptations provide insights into the symbiotic lifestyle of Sodalis glossinidius in the tsetse host.</title>
        <authorList>
            <person name="Toh H."/>
            <person name="Weiss B.L."/>
            <person name="Perkin S.A.H."/>
            <person name="Yamashita A."/>
            <person name="Oshima K."/>
            <person name="Hattori M."/>
            <person name="Aksoy S."/>
        </authorList>
    </citation>
    <scope>NUCLEOTIDE SEQUENCE [LARGE SCALE GENOMIC DNA]</scope>
    <source>
        <strain>morsitans</strain>
    </source>
</reference>
<name>PANC_SODGM</name>
<keyword id="KW-0067">ATP-binding</keyword>
<keyword id="KW-0963">Cytoplasm</keyword>
<keyword id="KW-0436">Ligase</keyword>
<keyword id="KW-0547">Nucleotide-binding</keyword>
<keyword id="KW-0566">Pantothenate biosynthesis</keyword>
<proteinExistence type="inferred from homology"/>
<protein>
    <recommendedName>
        <fullName evidence="1">Pantothenate synthetase</fullName>
        <shortName evidence="1">PS</shortName>
        <ecNumber evidence="1">6.3.2.1</ecNumber>
    </recommendedName>
    <alternativeName>
        <fullName evidence="1">Pantoate--beta-alanine ligase</fullName>
    </alternativeName>
    <alternativeName>
        <fullName evidence="1">Pantoate-activating enzyme</fullName>
    </alternativeName>
</protein>
<sequence>MLIIETPPTLRQTVKQWSQEHKRIALIPTMGNLHEGHMALIDAGRARADKVVVSVFVNPMQFDRPEDLAAYPRTLQEDCEQLTRRGVDMVFAPATGVIYPDDLASQTFVDVPRFANILEGESRPGHFRGVATIVSKLFNLVQPDVACFGEKDFQQLAFIRQLVRDMSYDIEIIGVPTVRAADGLALSSRNGYLSAEERRLAPQLNQVLMRLVAQLREGERHIDGLLTSATEQLLQAGLRPDTLVIRDAQTLQPLTVDSRRAVVLFTAWLGKARLIDNAQVDLIS</sequence>
<feature type="chain" id="PRO_0000305557" description="Pantothenate synthetase">
    <location>
        <begin position="1"/>
        <end position="284"/>
    </location>
</feature>
<feature type="active site" description="Proton donor" evidence="1">
    <location>
        <position position="37"/>
    </location>
</feature>
<feature type="binding site" evidence="1">
    <location>
        <begin position="30"/>
        <end position="37"/>
    </location>
    <ligand>
        <name>ATP</name>
        <dbReference type="ChEBI" id="CHEBI:30616"/>
    </ligand>
</feature>
<feature type="binding site" evidence="1">
    <location>
        <position position="61"/>
    </location>
    <ligand>
        <name>(R)-pantoate</name>
        <dbReference type="ChEBI" id="CHEBI:15980"/>
    </ligand>
</feature>
<feature type="binding site" evidence="1">
    <location>
        <position position="61"/>
    </location>
    <ligand>
        <name>beta-alanine</name>
        <dbReference type="ChEBI" id="CHEBI:57966"/>
    </ligand>
</feature>
<feature type="binding site" evidence="1">
    <location>
        <begin position="149"/>
        <end position="152"/>
    </location>
    <ligand>
        <name>ATP</name>
        <dbReference type="ChEBI" id="CHEBI:30616"/>
    </ligand>
</feature>
<feature type="binding site" evidence="1">
    <location>
        <position position="155"/>
    </location>
    <ligand>
        <name>(R)-pantoate</name>
        <dbReference type="ChEBI" id="CHEBI:15980"/>
    </ligand>
</feature>
<feature type="binding site" evidence="1">
    <location>
        <position position="178"/>
    </location>
    <ligand>
        <name>ATP</name>
        <dbReference type="ChEBI" id="CHEBI:30616"/>
    </ligand>
</feature>
<feature type="binding site" evidence="1">
    <location>
        <begin position="186"/>
        <end position="189"/>
    </location>
    <ligand>
        <name>ATP</name>
        <dbReference type="ChEBI" id="CHEBI:30616"/>
    </ligand>
</feature>
<accession>Q2NVR3</accession>
<evidence type="ECO:0000255" key="1">
    <source>
        <dbReference type="HAMAP-Rule" id="MF_00158"/>
    </source>
</evidence>
<dbReference type="EC" id="6.3.2.1" evidence="1"/>
<dbReference type="EMBL" id="AP008232">
    <property type="protein sequence ID" value="BAE73762.1"/>
    <property type="molecule type" value="Genomic_DNA"/>
</dbReference>
<dbReference type="RefSeq" id="WP_011410460.1">
    <property type="nucleotide sequence ID" value="NC_007712.1"/>
</dbReference>
<dbReference type="SMR" id="Q2NVR3"/>
<dbReference type="STRING" id="343509.SG0487"/>
<dbReference type="KEGG" id="sgl:SG0487"/>
<dbReference type="eggNOG" id="COG0414">
    <property type="taxonomic scope" value="Bacteria"/>
</dbReference>
<dbReference type="HOGENOM" id="CLU_047148_0_0_6"/>
<dbReference type="OrthoDB" id="9773087at2"/>
<dbReference type="BioCyc" id="SGLO343509:SGP1_RS04350-MONOMER"/>
<dbReference type="UniPathway" id="UPA00028">
    <property type="reaction ID" value="UER00005"/>
</dbReference>
<dbReference type="Proteomes" id="UP000001932">
    <property type="component" value="Chromosome"/>
</dbReference>
<dbReference type="GO" id="GO:0005829">
    <property type="term" value="C:cytosol"/>
    <property type="evidence" value="ECO:0007669"/>
    <property type="project" value="TreeGrafter"/>
</dbReference>
<dbReference type="GO" id="GO:0005524">
    <property type="term" value="F:ATP binding"/>
    <property type="evidence" value="ECO:0007669"/>
    <property type="project" value="UniProtKB-KW"/>
</dbReference>
<dbReference type="GO" id="GO:0004592">
    <property type="term" value="F:pantoate-beta-alanine ligase activity"/>
    <property type="evidence" value="ECO:0007669"/>
    <property type="project" value="UniProtKB-UniRule"/>
</dbReference>
<dbReference type="GO" id="GO:0015940">
    <property type="term" value="P:pantothenate biosynthetic process"/>
    <property type="evidence" value="ECO:0007669"/>
    <property type="project" value="UniProtKB-UniRule"/>
</dbReference>
<dbReference type="CDD" id="cd00560">
    <property type="entry name" value="PanC"/>
    <property type="match status" value="1"/>
</dbReference>
<dbReference type="FunFam" id="3.30.1300.10:FF:000001">
    <property type="entry name" value="Pantothenate synthetase"/>
    <property type="match status" value="1"/>
</dbReference>
<dbReference type="FunFam" id="3.40.50.620:FF:000013">
    <property type="entry name" value="Pantothenate synthetase"/>
    <property type="match status" value="1"/>
</dbReference>
<dbReference type="Gene3D" id="3.40.50.620">
    <property type="entry name" value="HUPs"/>
    <property type="match status" value="1"/>
</dbReference>
<dbReference type="Gene3D" id="3.30.1300.10">
    <property type="entry name" value="Pantoate-beta-alanine ligase, C-terminal domain"/>
    <property type="match status" value="1"/>
</dbReference>
<dbReference type="HAMAP" id="MF_00158">
    <property type="entry name" value="PanC"/>
    <property type="match status" value="1"/>
</dbReference>
<dbReference type="InterPro" id="IPR004821">
    <property type="entry name" value="Cyt_trans-like"/>
</dbReference>
<dbReference type="InterPro" id="IPR003721">
    <property type="entry name" value="Pantoate_ligase"/>
</dbReference>
<dbReference type="InterPro" id="IPR042176">
    <property type="entry name" value="Pantoate_ligase_C"/>
</dbReference>
<dbReference type="InterPro" id="IPR014729">
    <property type="entry name" value="Rossmann-like_a/b/a_fold"/>
</dbReference>
<dbReference type="NCBIfam" id="TIGR00125">
    <property type="entry name" value="cyt_tran_rel"/>
    <property type="match status" value="1"/>
</dbReference>
<dbReference type="NCBIfam" id="TIGR00018">
    <property type="entry name" value="panC"/>
    <property type="match status" value="1"/>
</dbReference>
<dbReference type="PANTHER" id="PTHR21299">
    <property type="entry name" value="CYTIDYLATE KINASE/PANTOATE-BETA-ALANINE LIGASE"/>
    <property type="match status" value="1"/>
</dbReference>
<dbReference type="PANTHER" id="PTHR21299:SF1">
    <property type="entry name" value="PANTOATE--BETA-ALANINE LIGASE"/>
    <property type="match status" value="1"/>
</dbReference>
<dbReference type="Pfam" id="PF02569">
    <property type="entry name" value="Pantoate_ligase"/>
    <property type="match status" value="1"/>
</dbReference>
<dbReference type="SUPFAM" id="SSF52374">
    <property type="entry name" value="Nucleotidylyl transferase"/>
    <property type="match status" value="1"/>
</dbReference>
<gene>
    <name evidence="1" type="primary">panC</name>
    <name type="ordered locus">SG0487</name>
</gene>
<comment type="function">
    <text evidence="1">Catalyzes the condensation of pantoate with beta-alanine in an ATP-dependent reaction via a pantoyl-adenylate intermediate.</text>
</comment>
<comment type="catalytic activity">
    <reaction evidence="1">
        <text>(R)-pantoate + beta-alanine + ATP = (R)-pantothenate + AMP + diphosphate + H(+)</text>
        <dbReference type="Rhea" id="RHEA:10912"/>
        <dbReference type="ChEBI" id="CHEBI:15378"/>
        <dbReference type="ChEBI" id="CHEBI:15980"/>
        <dbReference type="ChEBI" id="CHEBI:29032"/>
        <dbReference type="ChEBI" id="CHEBI:30616"/>
        <dbReference type="ChEBI" id="CHEBI:33019"/>
        <dbReference type="ChEBI" id="CHEBI:57966"/>
        <dbReference type="ChEBI" id="CHEBI:456215"/>
        <dbReference type="EC" id="6.3.2.1"/>
    </reaction>
</comment>
<comment type="pathway">
    <text evidence="1">Cofactor biosynthesis; (R)-pantothenate biosynthesis; (R)-pantothenate from (R)-pantoate and beta-alanine: step 1/1.</text>
</comment>
<comment type="subunit">
    <text evidence="1">Homodimer.</text>
</comment>
<comment type="subcellular location">
    <subcellularLocation>
        <location evidence="1">Cytoplasm</location>
    </subcellularLocation>
</comment>
<comment type="miscellaneous">
    <text evidence="1">The reaction proceeds by a bi uni uni bi ping pong mechanism.</text>
</comment>
<comment type="similarity">
    <text evidence="1">Belongs to the pantothenate synthetase family.</text>
</comment>